<dbReference type="EC" id="7.-.-.-" evidence="1"/>
<dbReference type="EMBL" id="AF222894">
    <property type="protein sequence ID" value="AAF30952.1"/>
    <property type="molecule type" value="Genomic_DNA"/>
</dbReference>
<dbReference type="RefSeq" id="WP_006688425.1">
    <property type="nucleotide sequence ID" value="NC_002162.1"/>
</dbReference>
<dbReference type="SMR" id="Q9PPV1"/>
<dbReference type="STRING" id="273119.UU539"/>
<dbReference type="EnsemblBacteria" id="AAF30952">
    <property type="protein sequence ID" value="AAF30952"/>
    <property type="gene ID" value="UU539"/>
</dbReference>
<dbReference type="GeneID" id="29672427"/>
<dbReference type="KEGG" id="uur:UU539"/>
<dbReference type="eggNOG" id="COG1122">
    <property type="taxonomic scope" value="Bacteria"/>
</dbReference>
<dbReference type="HOGENOM" id="CLU_000604_1_22_14"/>
<dbReference type="OrthoDB" id="9784332at2"/>
<dbReference type="Proteomes" id="UP000000423">
    <property type="component" value="Chromosome"/>
</dbReference>
<dbReference type="GO" id="GO:0043190">
    <property type="term" value="C:ATP-binding cassette (ABC) transporter complex"/>
    <property type="evidence" value="ECO:0007669"/>
    <property type="project" value="TreeGrafter"/>
</dbReference>
<dbReference type="GO" id="GO:0005524">
    <property type="term" value="F:ATP binding"/>
    <property type="evidence" value="ECO:0007669"/>
    <property type="project" value="UniProtKB-KW"/>
</dbReference>
<dbReference type="GO" id="GO:0016887">
    <property type="term" value="F:ATP hydrolysis activity"/>
    <property type="evidence" value="ECO:0007669"/>
    <property type="project" value="InterPro"/>
</dbReference>
<dbReference type="GO" id="GO:0042626">
    <property type="term" value="F:ATPase-coupled transmembrane transporter activity"/>
    <property type="evidence" value="ECO:0007669"/>
    <property type="project" value="TreeGrafter"/>
</dbReference>
<dbReference type="CDD" id="cd03225">
    <property type="entry name" value="ABC_cobalt_CbiO_domain1"/>
    <property type="match status" value="1"/>
</dbReference>
<dbReference type="FunFam" id="3.40.50.300:FF:000224">
    <property type="entry name" value="Energy-coupling factor transporter ATP-binding protein EcfA"/>
    <property type="match status" value="1"/>
</dbReference>
<dbReference type="Gene3D" id="3.40.50.300">
    <property type="entry name" value="P-loop containing nucleotide triphosphate hydrolases"/>
    <property type="match status" value="1"/>
</dbReference>
<dbReference type="InterPro" id="IPR003593">
    <property type="entry name" value="AAA+_ATPase"/>
</dbReference>
<dbReference type="InterPro" id="IPR003439">
    <property type="entry name" value="ABC_transporter-like_ATP-bd"/>
</dbReference>
<dbReference type="InterPro" id="IPR017871">
    <property type="entry name" value="ABC_transporter-like_CS"/>
</dbReference>
<dbReference type="InterPro" id="IPR015856">
    <property type="entry name" value="ABC_transpr_CbiO/EcfA_su"/>
</dbReference>
<dbReference type="InterPro" id="IPR050095">
    <property type="entry name" value="ECF_ABC_transporter_ATP-bd"/>
</dbReference>
<dbReference type="InterPro" id="IPR030947">
    <property type="entry name" value="EcfA_1"/>
</dbReference>
<dbReference type="InterPro" id="IPR027417">
    <property type="entry name" value="P-loop_NTPase"/>
</dbReference>
<dbReference type="NCBIfam" id="TIGR04520">
    <property type="entry name" value="ECF_ATPase_1"/>
    <property type="match status" value="1"/>
</dbReference>
<dbReference type="NCBIfam" id="NF010167">
    <property type="entry name" value="PRK13648.1"/>
    <property type="match status" value="1"/>
</dbReference>
<dbReference type="PANTHER" id="PTHR43553:SF24">
    <property type="entry name" value="ENERGY-COUPLING FACTOR TRANSPORTER ATP-BINDING PROTEIN ECFA1"/>
    <property type="match status" value="1"/>
</dbReference>
<dbReference type="PANTHER" id="PTHR43553">
    <property type="entry name" value="HEAVY METAL TRANSPORTER"/>
    <property type="match status" value="1"/>
</dbReference>
<dbReference type="Pfam" id="PF00005">
    <property type="entry name" value="ABC_tran"/>
    <property type="match status" value="1"/>
</dbReference>
<dbReference type="SMART" id="SM00382">
    <property type="entry name" value="AAA"/>
    <property type="match status" value="1"/>
</dbReference>
<dbReference type="SUPFAM" id="SSF52540">
    <property type="entry name" value="P-loop containing nucleoside triphosphate hydrolases"/>
    <property type="match status" value="1"/>
</dbReference>
<dbReference type="PROSITE" id="PS00211">
    <property type="entry name" value="ABC_TRANSPORTER_1"/>
    <property type="match status" value="1"/>
</dbReference>
<dbReference type="PROSITE" id="PS50893">
    <property type="entry name" value="ABC_TRANSPORTER_2"/>
    <property type="match status" value="1"/>
</dbReference>
<dbReference type="PROSITE" id="PS51246">
    <property type="entry name" value="CBIO"/>
    <property type="match status" value="1"/>
</dbReference>
<name>ECFA1_UREPA</name>
<organism>
    <name type="scientific">Ureaplasma parvum serovar 3 (strain ATCC 700970)</name>
    <dbReference type="NCBI Taxonomy" id="273119"/>
    <lineage>
        <taxon>Bacteria</taxon>
        <taxon>Bacillati</taxon>
        <taxon>Mycoplasmatota</taxon>
        <taxon>Mycoplasmoidales</taxon>
        <taxon>Mycoplasmoidaceae</taxon>
        <taxon>Ureaplasma</taxon>
    </lineage>
</organism>
<feature type="chain" id="PRO_0000092125" description="Energy-coupling factor transporter ATP-binding protein EcfA1">
    <location>
        <begin position="1"/>
        <end position="294"/>
    </location>
</feature>
<feature type="domain" description="ABC transporter" evidence="1">
    <location>
        <begin position="27"/>
        <end position="260"/>
    </location>
</feature>
<feature type="binding site" evidence="1">
    <location>
        <begin position="60"/>
        <end position="67"/>
    </location>
    <ligand>
        <name>ATP</name>
        <dbReference type="ChEBI" id="CHEBI:30616"/>
    </ligand>
</feature>
<keyword id="KW-0067">ATP-binding</keyword>
<keyword id="KW-1003">Cell membrane</keyword>
<keyword id="KW-0472">Membrane</keyword>
<keyword id="KW-0547">Nucleotide-binding</keyword>
<keyword id="KW-1185">Reference proteome</keyword>
<keyword id="KW-1278">Translocase</keyword>
<keyword id="KW-0813">Transport</keyword>
<proteinExistence type="inferred from homology"/>
<accession>Q9PPV1</accession>
<reference key="1">
    <citation type="journal article" date="2000" name="Nature">
        <title>The complete sequence of the mucosal pathogen Ureaplasma urealyticum.</title>
        <authorList>
            <person name="Glass J.I."/>
            <person name="Lefkowitz E.J."/>
            <person name="Glass J.S."/>
            <person name="Heiner C.R."/>
            <person name="Chen E.Y."/>
            <person name="Cassell G.H."/>
        </authorList>
    </citation>
    <scope>NUCLEOTIDE SEQUENCE [LARGE SCALE GENOMIC DNA]</scope>
    <source>
        <strain>ATCC 700970</strain>
    </source>
</reference>
<gene>
    <name evidence="1" type="primary">ecfA1</name>
    <name type="synonym">cbiO1</name>
    <name type="ordered locus">UU539</name>
</gene>
<protein>
    <recommendedName>
        <fullName evidence="1">Energy-coupling factor transporter ATP-binding protein EcfA1</fullName>
        <shortName evidence="1">ECF transporter A component EcfA1</shortName>
        <ecNumber evidence="1">7.-.-.-</ecNumber>
    </recommendedName>
</protein>
<comment type="function">
    <text evidence="1">ATP-binding (A) component of a common energy-coupling factor (ECF) ABC-transporter complex. Unlike classic ABC transporters this ECF transporter provides the energy necessary to transport a number of different substrates.</text>
</comment>
<comment type="subunit">
    <text evidence="1">Forms a stable energy-coupling factor (ECF) transporter complex composed of 2 membrane-embedded substrate-binding proteins (S component), 2 ATP-binding proteins (A component) and 2 transmembrane proteins (T component).</text>
</comment>
<comment type="subcellular location">
    <subcellularLocation>
        <location evidence="1">Cell membrane</location>
        <topology evidence="1">Peripheral membrane protein</topology>
    </subcellularLocation>
</comment>
<comment type="similarity">
    <text evidence="1">Belongs to the ABC transporter superfamily. Energy-coupling factor EcfA family.</text>
</comment>
<evidence type="ECO:0000255" key="1">
    <source>
        <dbReference type="HAMAP-Rule" id="MF_01710"/>
    </source>
</evidence>
<sequence>MSHNDKNTHNYQISSLDKIINDSSVAIEFENVYFAYTEERMILKNVSFTINDNEYVCVIGHNGSGKSTISKVLTGLLKPKSGVIKLFGIEISAANLKYLRNNIGIVFQNPDNQFVGITAEDDIAFGLENRKVPPNKMWDIINDAAVATGIEDLLKKESLELSGGQKQRVAIASVLAINPKVIIFDESTSMLDPKGKNELKELMVSLRDVAKKTIISITHDMEEVVKADKVIVMSNGEVQYIGTPQEIFANEERLLKMQLDIPFTLKLAKTLKEKGLKIDLTLNNEELIEKICKN</sequence>